<accession>Q0AHZ8</accession>
<proteinExistence type="inferred from homology"/>
<reference key="1">
    <citation type="journal article" date="2007" name="Environ. Microbiol.">
        <title>Whole-genome analysis of the ammonia-oxidizing bacterium, Nitrosomonas eutropha C91: implications for niche adaptation.</title>
        <authorList>
            <person name="Stein L.Y."/>
            <person name="Arp D.J."/>
            <person name="Berube P.M."/>
            <person name="Chain P.S."/>
            <person name="Hauser L."/>
            <person name="Jetten M.S."/>
            <person name="Klotz M.G."/>
            <person name="Larimer F.W."/>
            <person name="Norton J.M."/>
            <person name="Op den Camp H.J.M."/>
            <person name="Shin M."/>
            <person name="Wei X."/>
        </authorList>
    </citation>
    <scope>NUCLEOTIDE SEQUENCE [LARGE SCALE GENOMIC DNA]</scope>
    <source>
        <strain>DSM 101675 / C91 / Nm57</strain>
    </source>
</reference>
<keyword id="KW-0028">Amino-acid biosynthesis</keyword>
<keyword id="KW-0055">Arginine biosynthesis</keyword>
<keyword id="KW-0963">Cytoplasm</keyword>
<keyword id="KW-0521">NADP</keyword>
<keyword id="KW-0560">Oxidoreductase</keyword>
<organism>
    <name type="scientific">Nitrosomonas eutropha (strain DSM 101675 / C91 / Nm57)</name>
    <dbReference type="NCBI Taxonomy" id="335283"/>
    <lineage>
        <taxon>Bacteria</taxon>
        <taxon>Pseudomonadati</taxon>
        <taxon>Pseudomonadota</taxon>
        <taxon>Betaproteobacteria</taxon>
        <taxon>Nitrosomonadales</taxon>
        <taxon>Nitrosomonadaceae</taxon>
        <taxon>Nitrosomonas</taxon>
    </lineage>
</organism>
<feature type="chain" id="PRO_1000011024" description="N-acetyl-gamma-glutamyl-phosphate reductase">
    <location>
        <begin position="1"/>
        <end position="342"/>
    </location>
</feature>
<feature type="active site" evidence="1">
    <location>
        <position position="149"/>
    </location>
</feature>
<protein>
    <recommendedName>
        <fullName evidence="1">N-acetyl-gamma-glutamyl-phosphate reductase</fullName>
        <shortName evidence="1">AGPR</shortName>
        <ecNumber evidence="1">1.2.1.38</ecNumber>
    </recommendedName>
    <alternativeName>
        <fullName evidence="1">N-acetyl-glutamate semialdehyde dehydrogenase</fullName>
        <shortName evidence="1">NAGSA dehydrogenase</shortName>
    </alternativeName>
</protein>
<dbReference type="EC" id="1.2.1.38" evidence="1"/>
<dbReference type="EMBL" id="CP000450">
    <property type="protein sequence ID" value="ABI59034.1"/>
    <property type="molecule type" value="Genomic_DNA"/>
</dbReference>
<dbReference type="RefSeq" id="WP_011633859.1">
    <property type="nucleotide sequence ID" value="NC_008344.1"/>
</dbReference>
<dbReference type="SMR" id="Q0AHZ8"/>
<dbReference type="STRING" id="335283.Neut_0764"/>
<dbReference type="KEGG" id="net:Neut_0764"/>
<dbReference type="eggNOG" id="COG0002">
    <property type="taxonomic scope" value="Bacteria"/>
</dbReference>
<dbReference type="HOGENOM" id="CLU_006384_0_1_4"/>
<dbReference type="OrthoDB" id="9801289at2"/>
<dbReference type="UniPathway" id="UPA00068">
    <property type="reaction ID" value="UER00108"/>
</dbReference>
<dbReference type="Proteomes" id="UP000001966">
    <property type="component" value="Chromosome"/>
</dbReference>
<dbReference type="GO" id="GO:0005737">
    <property type="term" value="C:cytoplasm"/>
    <property type="evidence" value="ECO:0007669"/>
    <property type="project" value="UniProtKB-SubCell"/>
</dbReference>
<dbReference type="GO" id="GO:0003942">
    <property type="term" value="F:N-acetyl-gamma-glutamyl-phosphate reductase activity"/>
    <property type="evidence" value="ECO:0007669"/>
    <property type="project" value="UniProtKB-UniRule"/>
</dbReference>
<dbReference type="GO" id="GO:0051287">
    <property type="term" value="F:NAD binding"/>
    <property type="evidence" value="ECO:0007669"/>
    <property type="project" value="InterPro"/>
</dbReference>
<dbReference type="GO" id="GO:0070401">
    <property type="term" value="F:NADP+ binding"/>
    <property type="evidence" value="ECO:0007669"/>
    <property type="project" value="InterPro"/>
</dbReference>
<dbReference type="GO" id="GO:0006526">
    <property type="term" value="P:L-arginine biosynthetic process"/>
    <property type="evidence" value="ECO:0007669"/>
    <property type="project" value="UniProtKB-UniRule"/>
</dbReference>
<dbReference type="CDD" id="cd23934">
    <property type="entry name" value="AGPR_1_C"/>
    <property type="match status" value="1"/>
</dbReference>
<dbReference type="CDD" id="cd17895">
    <property type="entry name" value="AGPR_1_N"/>
    <property type="match status" value="1"/>
</dbReference>
<dbReference type="FunFam" id="3.30.360.10:FF:000014">
    <property type="entry name" value="N-acetyl-gamma-glutamyl-phosphate reductase"/>
    <property type="match status" value="1"/>
</dbReference>
<dbReference type="Gene3D" id="3.30.360.10">
    <property type="entry name" value="Dihydrodipicolinate Reductase, domain 2"/>
    <property type="match status" value="1"/>
</dbReference>
<dbReference type="Gene3D" id="3.40.50.720">
    <property type="entry name" value="NAD(P)-binding Rossmann-like Domain"/>
    <property type="match status" value="1"/>
</dbReference>
<dbReference type="HAMAP" id="MF_00150">
    <property type="entry name" value="ArgC_type1"/>
    <property type="match status" value="1"/>
</dbReference>
<dbReference type="InterPro" id="IPR023013">
    <property type="entry name" value="AGPR_AS"/>
</dbReference>
<dbReference type="InterPro" id="IPR000706">
    <property type="entry name" value="AGPR_type-1"/>
</dbReference>
<dbReference type="InterPro" id="IPR036291">
    <property type="entry name" value="NAD(P)-bd_dom_sf"/>
</dbReference>
<dbReference type="InterPro" id="IPR050085">
    <property type="entry name" value="NAGSA_dehydrogenase"/>
</dbReference>
<dbReference type="InterPro" id="IPR000534">
    <property type="entry name" value="Semialdehyde_DH_NAD-bd"/>
</dbReference>
<dbReference type="NCBIfam" id="TIGR01850">
    <property type="entry name" value="argC"/>
    <property type="match status" value="1"/>
</dbReference>
<dbReference type="PANTHER" id="PTHR32338:SF10">
    <property type="entry name" value="N-ACETYL-GAMMA-GLUTAMYL-PHOSPHATE REDUCTASE, CHLOROPLASTIC-RELATED"/>
    <property type="match status" value="1"/>
</dbReference>
<dbReference type="PANTHER" id="PTHR32338">
    <property type="entry name" value="N-ACETYL-GAMMA-GLUTAMYL-PHOSPHATE REDUCTASE, CHLOROPLASTIC-RELATED-RELATED"/>
    <property type="match status" value="1"/>
</dbReference>
<dbReference type="Pfam" id="PF01118">
    <property type="entry name" value="Semialdhyde_dh"/>
    <property type="match status" value="1"/>
</dbReference>
<dbReference type="Pfam" id="PF22698">
    <property type="entry name" value="Semialdhyde_dhC_1"/>
    <property type="match status" value="1"/>
</dbReference>
<dbReference type="SMART" id="SM00859">
    <property type="entry name" value="Semialdhyde_dh"/>
    <property type="match status" value="1"/>
</dbReference>
<dbReference type="SUPFAM" id="SSF55347">
    <property type="entry name" value="Glyceraldehyde-3-phosphate dehydrogenase-like, C-terminal domain"/>
    <property type="match status" value="1"/>
</dbReference>
<dbReference type="SUPFAM" id="SSF51735">
    <property type="entry name" value="NAD(P)-binding Rossmann-fold domains"/>
    <property type="match status" value="1"/>
</dbReference>
<dbReference type="PROSITE" id="PS01224">
    <property type="entry name" value="ARGC"/>
    <property type="match status" value="1"/>
</dbReference>
<gene>
    <name evidence="1" type="primary">argC</name>
    <name type="ordered locus">Neut_0764</name>
</gene>
<name>ARGC_NITEC</name>
<sequence length="342" mass="37172">MINVGIVGGTGYTGVELLRILAQHPKAKLKVITSRQEAGTGVDDLFSSLRGQITLKFSDPLKVDFGKCDVVFFATPNGIAMQQVSALLGSGIKVIDLSADFRIKDVAEWEEWYGMSHTAPELVAEAVYGLPEVNREKIRNARLIANPGCYPTAVQLGFIPLIEAGAVDENHLIADTKSGVSGAGRKAEIHTLYAEASDNFKSYAVAGHRHLPEIRQGLSERSGKPIDLTFVPHLTPMIRGIHATLYARLTRDVDLQALYESRYANEPFVDVLPAGSHPETRSVRGSNFCRIAVHRPRNGDTAVILSVTDNLVKGAAGQAVQNMNIMYGLPEKMGIQHIPLLP</sequence>
<evidence type="ECO:0000255" key="1">
    <source>
        <dbReference type="HAMAP-Rule" id="MF_00150"/>
    </source>
</evidence>
<comment type="function">
    <text evidence="1">Catalyzes the NADPH-dependent reduction of N-acetyl-5-glutamyl phosphate to yield N-acetyl-L-glutamate 5-semialdehyde.</text>
</comment>
<comment type="catalytic activity">
    <reaction evidence="1">
        <text>N-acetyl-L-glutamate 5-semialdehyde + phosphate + NADP(+) = N-acetyl-L-glutamyl 5-phosphate + NADPH + H(+)</text>
        <dbReference type="Rhea" id="RHEA:21588"/>
        <dbReference type="ChEBI" id="CHEBI:15378"/>
        <dbReference type="ChEBI" id="CHEBI:29123"/>
        <dbReference type="ChEBI" id="CHEBI:43474"/>
        <dbReference type="ChEBI" id="CHEBI:57783"/>
        <dbReference type="ChEBI" id="CHEBI:57936"/>
        <dbReference type="ChEBI" id="CHEBI:58349"/>
        <dbReference type="EC" id="1.2.1.38"/>
    </reaction>
</comment>
<comment type="pathway">
    <text evidence="1">Amino-acid biosynthesis; L-arginine biosynthesis; N(2)-acetyl-L-ornithine from L-glutamate: step 3/4.</text>
</comment>
<comment type="subcellular location">
    <subcellularLocation>
        <location evidence="1">Cytoplasm</location>
    </subcellularLocation>
</comment>
<comment type="similarity">
    <text evidence="1">Belongs to the NAGSA dehydrogenase family. Type 1 subfamily.</text>
</comment>